<feature type="chain" id="PRO_0000244210" description="Large ribosomal subunit protein bL25">
    <location>
        <begin position="1"/>
        <end position="210"/>
    </location>
</feature>
<feature type="region of interest" description="Disordered" evidence="2">
    <location>
        <begin position="186"/>
        <end position="210"/>
    </location>
</feature>
<feature type="compositionally biased region" description="Low complexity" evidence="2">
    <location>
        <begin position="198"/>
        <end position="210"/>
    </location>
</feature>
<dbReference type="EMBL" id="CP000236">
    <property type="protein sequence ID" value="ABD45505.1"/>
    <property type="molecule type" value="Genomic_DNA"/>
</dbReference>
<dbReference type="RefSeq" id="WP_011452426.1">
    <property type="nucleotide sequence ID" value="NC_007799.1"/>
</dbReference>
<dbReference type="SMR" id="Q2GHW3"/>
<dbReference type="STRING" id="205920.ECH_0142"/>
<dbReference type="KEGG" id="ech:ECH_0142"/>
<dbReference type="eggNOG" id="COG1825">
    <property type="taxonomic scope" value="Bacteria"/>
</dbReference>
<dbReference type="HOGENOM" id="CLU_075939_0_1_5"/>
<dbReference type="OrthoDB" id="9806411at2"/>
<dbReference type="Proteomes" id="UP000008320">
    <property type="component" value="Chromosome"/>
</dbReference>
<dbReference type="GO" id="GO:0022625">
    <property type="term" value="C:cytosolic large ribosomal subunit"/>
    <property type="evidence" value="ECO:0007669"/>
    <property type="project" value="TreeGrafter"/>
</dbReference>
<dbReference type="GO" id="GO:0008097">
    <property type="term" value="F:5S rRNA binding"/>
    <property type="evidence" value="ECO:0007669"/>
    <property type="project" value="InterPro"/>
</dbReference>
<dbReference type="GO" id="GO:0003735">
    <property type="term" value="F:structural constituent of ribosome"/>
    <property type="evidence" value="ECO:0007669"/>
    <property type="project" value="InterPro"/>
</dbReference>
<dbReference type="GO" id="GO:0006412">
    <property type="term" value="P:translation"/>
    <property type="evidence" value="ECO:0007669"/>
    <property type="project" value="UniProtKB-UniRule"/>
</dbReference>
<dbReference type="CDD" id="cd00495">
    <property type="entry name" value="Ribosomal_L25_TL5_CTC"/>
    <property type="match status" value="1"/>
</dbReference>
<dbReference type="Gene3D" id="2.170.120.20">
    <property type="entry name" value="Ribosomal protein L25, beta domain"/>
    <property type="match status" value="1"/>
</dbReference>
<dbReference type="Gene3D" id="2.40.240.10">
    <property type="entry name" value="Ribosomal Protein L25, Chain P"/>
    <property type="match status" value="1"/>
</dbReference>
<dbReference type="HAMAP" id="MF_01334">
    <property type="entry name" value="Ribosomal_bL25_CTC"/>
    <property type="match status" value="1"/>
</dbReference>
<dbReference type="InterPro" id="IPR020056">
    <property type="entry name" value="Rbsml_bL25/Gln-tRNA_synth_N"/>
</dbReference>
<dbReference type="InterPro" id="IPR011035">
    <property type="entry name" value="Ribosomal_bL25/Gln-tRNA_synth"/>
</dbReference>
<dbReference type="InterPro" id="IPR020057">
    <property type="entry name" value="Ribosomal_bL25_b-dom"/>
</dbReference>
<dbReference type="InterPro" id="IPR037121">
    <property type="entry name" value="Ribosomal_bL25_C"/>
</dbReference>
<dbReference type="InterPro" id="IPR001021">
    <property type="entry name" value="Ribosomal_bL25_long"/>
</dbReference>
<dbReference type="InterPro" id="IPR029751">
    <property type="entry name" value="Ribosomal_L25_dom"/>
</dbReference>
<dbReference type="InterPro" id="IPR020930">
    <property type="entry name" value="Ribosomal_uL5_bac-type"/>
</dbReference>
<dbReference type="NCBIfam" id="TIGR00731">
    <property type="entry name" value="bL25_bact_ctc"/>
    <property type="match status" value="1"/>
</dbReference>
<dbReference type="NCBIfam" id="NF004128">
    <property type="entry name" value="PRK05618.1-2"/>
    <property type="match status" value="1"/>
</dbReference>
<dbReference type="NCBIfam" id="NF004612">
    <property type="entry name" value="PRK05943.1"/>
    <property type="match status" value="1"/>
</dbReference>
<dbReference type="PANTHER" id="PTHR33284">
    <property type="entry name" value="RIBOSOMAL PROTEIN L25/GLN-TRNA SYNTHETASE, ANTI-CODON-BINDING DOMAIN-CONTAINING PROTEIN"/>
    <property type="match status" value="1"/>
</dbReference>
<dbReference type="PANTHER" id="PTHR33284:SF1">
    <property type="entry name" value="RIBOSOMAL PROTEIN L25_GLN-TRNA SYNTHETASE, ANTI-CODON-BINDING DOMAIN-CONTAINING PROTEIN"/>
    <property type="match status" value="1"/>
</dbReference>
<dbReference type="Pfam" id="PF01386">
    <property type="entry name" value="Ribosomal_L25p"/>
    <property type="match status" value="1"/>
</dbReference>
<dbReference type="Pfam" id="PF14693">
    <property type="entry name" value="Ribosomal_TL5_C"/>
    <property type="match status" value="1"/>
</dbReference>
<dbReference type="SUPFAM" id="SSF50715">
    <property type="entry name" value="Ribosomal protein L25-like"/>
    <property type="match status" value="1"/>
</dbReference>
<name>RL25_EHRCR</name>
<protein>
    <recommendedName>
        <fullName evidence="1">Large ribosomal subunit protein bL25</fullName>
    </recommendedName>
    <alternativeName>
        <fullName evidence="3">50S ribosomal protein L25</fullName>
    </alternativeName>
    <alternativeName>
        <fullName evidence="1">General stress protein CTC</fullName>
    </alternativeName>
</protein>
<reference key="1">
    <citation type="journal article" date="2006" name="PLoS Genet.">
        <title>Comparative genomics of emerging human ehrlichiosis agents.</title>
        <authorList>
            <person name="Dunning Hotopp J.C."/>
            <person name="Lin M."/>
            <person name="Madupu R."/>
            <person name="Crabtree J."/>
            <person name="Angiuoli S.V."/>
            <person name="Eisen J.A."/>
            <person name="Seshadri R."/>
            <person name="Ren Q."/>
            <person name="Wu M."/>
            <person name="Utterback T.R."/>
            <person name="Smith S."/>
            <person name="Lewis M."/>
            <person name="Khouri H."/>
            <person name="Zhang C."/>
            <person name="Niu H."/>
            <person name="Lin Q."/>
            <person name="Ohashi N."/>
            <person name="Zhi N."/>
            <person name="Nelson W.C."/>
            <person name="Brinkac L.M."/>
            <person name="Dodson R.J."/>
            <person name="Rosovitz M.J."/>
            <person name="Sundaram J.P."/>
            <person name="Daugherty S.C."/>
            <person name="Davidsen T."/>
            <person name="Durkin A.S."/>
            <person name="Gwinn M.L."/>
            <person name="Haft D.H."/>
            <person name="Selengut J.D."/>
            <person name="Sullivan S.A."/>
            <person name="Zafar N."/>
            <person name="Zhou L."/>
            <person name="Benahmed F."/>
            <person name="Forberger H."/>
            <person name="Halpin R."/>
            <person name="Mulligan S."/>
            <person name="Robinson J."/>
            <person name="White O."/>
            <person name="Rikihisa Y."/>
            <person name="Tettelin H."/>
        </authorList>
    </citation>
    <scope>NUCLEOTIDE SEQUENCE [LARGE SCALE GENOMIC DNA]</scope>
    <source>
        <strain>ATCC CRL-10679 / Arkansas</strain>
    </source>
</reference>
<proteinExistence type="inferred from homology"/>
<sequence length="210" mass="23162">MTDQGIVKINASLRKNVGTGPSRALRLSGEIPAVIYGKGRDSLSISLSNREFVSKYRSAALSTHLIELEIDNKKEYVLMRDVQKHPVTDRIQHVDFQFIDYGTEIKIEVPLIFTNEQKCIGIKRGGVLNILHRTLSIKCSPKAILQNIEIDLSGLTTGHSIHVSDLKLPPEVNVTMKEHNPAIVTISSASTEKEAESNQESTSTTPSSES</sequence>
<organism>
    <name type="scientific">Ehrlichia chaffeensis (strain ATCC CRL-10679 / Arkansas)</name>
    <dbReference type="NCBI Taxonomy" id="205920"/>
    <lineage>
        <taxon>Bacteria</taxon>
        <taxon>Pseudomonadati</taxon>
        <taxon>Pseudomonadota</taxon>
        <taxon>Alphaproteobacteria</taxon>
        <taxon>Rickettsiales</taxon>
        <taxon>Anaplasmataceae</taxon>
        <taxon>Ehrlichia</taxon>
    </lineage>
</organism>
<evidence type="ECO:0000255" key="1">
    <source>
        <dbReference type="HAMAP-Rule" id="MF_01334"/>
    </source>
</evidence>
<evidence type="ECO:0000256" key="2">
    <source>
        <dbReference type="SAM" id="MobiDB-lite"/>
    </source>
</evidence>
<evidence type="ECO:0000305" key="3"/>
<keyword id="KW-1185">Reference proteome</keyword>
<keyword id="KW-0687">Ribonucleoprotein</keyword>
<keyword id="KW-0689">Ribosomal protein</keyword>
<keyword id="KW-0694">RNA-binding</keyword>
<keyword id="KW-0699">rRNA-binding</keyword>
<comment type="function">
    <text evidence="1">This is one of the proteins that binds to the 5S RNA in the ribosome where it forms part of the central protuberance.</text>
</comment>
<comment type="subunit">
    <text evidence="1">Part of the 50S ribosomal subunit; part of the 5S rRNA/L5/L18/L25 subcomplex. Contacts the 5S rRNA. Binds to the 5S rRNA independently of L5 and L18.</text>
</comment>
<comment type="similarity">
    <text evidence="1">Belongs to the bacterial ribosomal protein bL25 family. CTC subfamily.</text>
</comment>
<gene>
    <name evidence="1" type="primary">rplY</name>
    <name evidence="1" type="synonym">ctc</name>
    <name type="ordered locus">ECH_0142</name>
</gene>
<accession>Q2GHW3</accession>